<comment type="function">
    <text evidence="1">Transfers the gamma-phosphate of ATP to the 4'-position of a tetraacyldisaccharide 1-phosphate intermediate (termed DS-1-P) to form tetraacyldisaccharide 1,4'-bis-phosphate (lipid IVA).</text>
</comment>
<comment type="catalytic activity">
    <reaction evidence="1">
        <text>a lipid A disaccharide + ATP = a lipid IVA + ADP + H(+)</text>
        <dbReference type="Rhea" id="RHEA:67840"/>
        <dbReference type="ChEBI" id="CHEBI:15378"/>
        <dbReference type="ChEBI" id="CHEBI:30616"/>
        <dbReference type="ChEBI" id="CHEBI:176343"/>
        <dbReference type="ChEBI" id="CHEBI:176425"/>
        <dbReference type="ChEBI" id="CHEBI:456216"/>
        <dbReference type="EC" id="2.7.1.130"/>
    </reaction>
</comment>
<comment type="pathway">
    <text evidence="1">Glycolipid biosynthesis; lipid IV(A) biosynthesis; lipid IV(A) from (3R)-3-hydroxytetradecanoyl-[acyl-carrier-protein] and UDP-N-acetyl-alpha-D-glucosamine: step 6/6.</text>
</comment>
<comment type="similarity">
    <text evidence="1">Belongs to the LpxK family.</text>
</comment>
<protein>
    <recommendedName>
        <fullName evidence="1">Tetraacyldisaccharide 4'-kinase</fullName>
        <ecNumber evidence="1">2.7.1.130</ecNumber>
    </recommendedName>
    <alternativeName>
        <fullName evidence="1">Lipid A 4'-kinase</fullName>
    </alternativeName>
</protein>
<reference key="1">
    <citation type="journal article" date="2009" name="PLoS ONE">
        <title>Genome sequence of the endosymbiont Rickettsia peacockii and comparison with virulent Rickettsia rickettsii: identification of virulence factors.</title>
        <authorList>
            <person name="Felsheim R.F."/>
            <person name="Kurtti T.J."/>
            <person name="Munderloh U.G."/>
        </authorList>
    </citation>
    <scope>NUCLEOTIDE SEQUENCE [LARGE SCALE GENOMIC DNA]</scope>
    <source>
        <strain>Rustic</strain>
    </source>
</reference>
<organism>
    <name type="scientific">Rickettsia peacockii (strain Rustic)</name>
    <dbReference type="NCBI Taxonomy" id="562019"/>
    <lineage>
        <taxon>Bacteria</taxon>
        <taxon>Pseudomonadati</taxon>
        <taxon>Pseudomonadota</taxon>
        <taxon>Alphaproteobacteria</taxon>
        <taxon>Rickettsiales</taxon>
        <taxon>Rickettsiaceae</taxon>
        <taxon>Rickettsieae</taxon>
        <taxon>Rickettsia</taxon>
        <taxon>spotted fever group</taxon>
    </lineage>
</organism>
<evidence type="ECO:0000255" key="1">
    <source>
        <dbReference type="HAMAP-Rule" id="MF_00409"/>
    </source>
</evidence>
<sequence>MIKLLYPEFWQKRNIIAYLLLPISLIYQFLGYLRASLARPIMLPAKVICVGNCSVGGTGKTQIVMYLAKLLKARNVSFVIVTKAYGSNLKSATTIHQGHTALEVGDEGVILAKYGAVIATKNIKEIVPLINELKPDIIIVDDFLQNPYFHKDFTIVSVDSQRLFGNGFLIPAGPLRQYPNKALDAADLIFLVSSHQDKIPKILTPYVNKLINAQIVPSHNIDKTKNYFAFSGIGNPERFFATLKNYGLNITGYKIFPDHYNYLQADLENLYSLAKEHNATLVTTRKDHVKFNDLNNNIVCLDVELSINHPDLLNEKIFKKA</sequence>
<proteinExistence type="inferred from homology"/>
<accession>C4K0S8</accession>
<gene>
    <name evidence="1" type="primary">lpxK</name>
    <name type="ordered locus">RPR_01355</name>
</gene>
<keyword id="KW-0067">ATP-binding</keyword>
<keyword id="KW-0418">Kinase</keyword>
<keyword id="KW-0441">Lipid A biosynthesis</keyword>
<keyword id="KW-0444">Lipid biosynthesis</keyword>
<keyword id="KW-0443">Lipid metabolism</keyword>
<keyword id="KW-0547">Nucleotide-binding</keyword>
<keyword id="KW-0808">Transferase</keyword>
<name>LPXK_RICPU</name>
<feature type="chain" id="PRO_1000205974" description="Tetraacyldisaccharide 4'-kinase">
    <location>
        <begin position="1"/>
        <end position="321"/>
    </location>
</feature>
<feature type="binding site" evidence="1">
    <location>
        <begin position="54"/>
        <end position="61"/>
    </location>
    <ligand>
        <name>ATP</name>
        <dbReference type="ChEBI" id="CHEBI:30616"/>
    </ligand>
</feature>
<dbReference type="EC" id="2.7.1.130" evidence="1"/>
<dbReference type="EMBL" id="CP001227">
    <property type="protein sequence ID" value="ACR47179.1"/>
    <property type="molecule type" value="Genomic_DNA"/>
</dbReference>
<dbReference type="RefSeq" id="WP_012736466.1">
    <property type="nucleotide sequence ID" value="NC_012730.1"/>
</dbReference>
<dbReference type="SMR" id="C4K0S8"/>
<dbReference type="KEGG" id="rpk:RPR_01355"/>
<dbReference type="HOGENOM" id="CLU_038816_0_0_5"/>
<dbReference type="UniPathway" id="UPA00359">
    <property type="reaction ID" value="UER00482"/>
</dbReference>
<dbReference type="Proteomes" id="UP000005015">
    <property type="component" value="Chromosome"/>
</dbReference>
<dbReference type="GO" id="GO:0005886">
    <property type="term" value="C:plasma membrane"/>
    <property type="evidence" value="ECO:0007669"/>
    <property type="project" value="TreeGrafter"/>
</dbReference>
<dbReference type="GO" id="GO:0005524">
    <property type="term" value="F:ATP binding"/>
    <property type="evidence" value="ECO:0007669"/>
    <property type="project" value="UniProtKB-UniRule"/>
</dbReference>
<dbReference type="GO" id="GO:0009029">
    <property type="term" value="F:tetraacyldisaccharide 4'-kinase activity"/>
    <property type="evidence" value="ECO:0007669"/>
    <property type="project" value="UniProtKB-UniRule"/>
</dbReference>
<dbReference type="GO" id="GO:0009245">
    <property type="term" value="P:lipid A biosynthetic process"/>
    <property type="evidence" value="ECO:0007669"/>
    <property type="project" value="UniProtKB-UniRule"/>
</dbReference>
<dbReference type="GO" id="GO:0009244">
    <property type="term" value="P:lipopolysaccharide core region biosynthetic process"/>
    <property type="evidence" value="ECO:0007669"/>
    <property type="project" value="TreeGrafter"/>
</dbReference>
<dbReference type="HAMAP" id="MF_00409">
    <property type="entry name" value="LpxK"/>
    <property type="match status" value="1"/>
</dbReference>
<dbReference type="InterPro" id="IPR003758">
    <property type="entry name" value="LpxK"/>
</dbReference>
<dbReference type="InterPro" id="IPR027417">
    <property type="entry name" value="P-loop_NTPase"/>
</dbReference>
<dbReference type="NCBIfam" id="TIGR00682">
    <property type="entry name" value="lpxK"/>
    <property type="match status" value="1"/>
</dbReference>
<dbReference type="PANTHER" id="PTHR42724">
    <property type="entry name" value="TETRAACYLDISACCHARIDE 4'-KINASE"/>
    <property type="match status" value="1"/>
</dbReference>
<dbReference type="PANTHER" id="PTHR42724:SF1">
    <property type="entry name" value="TETRAACYLDISACCHARIDE 4'-KINASE, MITOCHONDRIAL-RELATED"/>
    <property type="match status" value="1"/>
</dbReference>
<dbReference type="Pfam" id="PF02606">
    <property type="entry name" value="LpxK"/>
    <property type="match status" value="1"/>
</dbReference>
<dbReference type="SUPFAM" id="SSF52540">
    <property type="entry name" value="P-loop containing nucleoside triphosphate hydrolases"/>
    <property type="match status" value="1"/>
</dbReference>